<reference key="1">
    <citation type="journal article" date="2005" name="Science">
        <title>The transcriptional landscape of the mammalian genome.</title>
        <authorList>
            <person name="Carninci P."/>
            <person name="Kasukawa T."/>
            <person name="Katayama S."/>
            <person name="Gough J."/>
            <person name="Frith M.C."/>
            <person name="Maeda N."/>
            <person name="Oyama R."/>
            <person name="Ravasi T."/>
            <person name="Lenhard B."/>
            <person name="Wells C."/>
            <person name="Kodzius R."/>
            <person name="Shimokawa K."/>
            <person name="Bajic V.B."/>
            <person name="Brenner S.E."/>
            <person name="Batalov S."/>
            <person name="Forrest A.R."/>
            <person name="Zavolan M."/>
            <person name="Davis M.J."/>
            <person name="Wilming L.G."/>
            <person name="Aidinis V."/>
            <person name="Allen J.E."/>
            <person name="Ambesi-Impiombato A."/>
            <person name="Apweiler R."/>
            <person name="Aturaliya R.N."/>
            <person name="Bailey T.L."/>
            <person name="Bansal M."/>
            <person name="Baxter L."/>
            <person name="Beisel K.W."/>
            <person name="Bersano T."/>
            <person name="Bono H."/>
            <person name="Chalk A.M."/>
            <person name="Chiu K.P."/>
            <person name="Choudhary V."/>
            <person name="Christoffels A."/>
            <person name="Clutterbuck D.R."/>
            <person name="Crowe M.L."/>
            <person name="Dalla E."/>
            <person name="Dalrymple B.P."/>
            <person name="de Bono B."/>
            <person name="Della Gatta G."/>
            <person name="di Bernardo D."/>
            <person name="Down T."/>
            <person name="Engstrom P."/>
            <person name="Fagiolini M."/>
            <person name="Faulkner G."/>
            <person name="Fletcher C.F."/>
            <person name="Fukushima T."/>
            <person name="Furuno M."/>
            <person name="Futaki S."/>
            <person name="Gariboldi M."/>
            <person name="Georgii-Hemming P."/>
            <person name="Gingeras T.R."/>
            <person name="Gojobori T."/>
            <person name="Green R.E."/>
            <person name="Gustincich S."/>
            <person name="Harbers M."/>
            <person name="Hayashi Y."/>
            <person name="Hensch T.K."/>
            <person name="Hirokawa N."/>
            <person name="Hill D."/>
            <person name="Huminiecki L."/>
            <person name="Iacono M."/>
            <person name="Ikeo K."/>
            <person name="Iwama A."/>
            <person name="Ishikawa T."/>
            <person name="Jakt M."/>
            <person name="Kanapin A."/>
            <person name="Katoh M."/>
            <person name="Kawasawa Y."/>
            <person name="Kelso J."/>
            <person name="Kitamura H."/>
            <person name="Kitano H."/>
            <person name="Kollias G."/>
            <person name="Krishnan S.P."/>
            <person name="Kruger A."/>
            <person name="Kummerfeld S.K."/>
            <person name="Kurochkin I.V."/>
            <person name="Lareau L.F."/>
            <person name="Lazarevic D."/>
            <person name="Lipovich L."/>
            <person name="Liu J."/>
            <person name="Liuni S."/>
            <person name="McWilliam S."/>
            <person name="Madan Babu M."/>
            <person name="Madera M."/>
            <person name="Marchionni L."/>
            <person name="Matsuda H."/>
            <person name="Matsuzawa S."/>
            <person name="Miki H."/>
            <person name="Mignone F."/>
            <person name="Miyake S."/>
            <person name="Morris K."/>
            <person name="Mottagui-Tabar S."/>
            <person name="Mulder N."/>
            <person name="Nakano N."/>
            <person name="Nakauchi H."/>
            <person name="Ng P."/>
            <person name="Nilsson R."/>
            <person name="Nishiguchi S."/>
            <person name="Nishikawa S."/>
            <person name="Nori F."/>
            <person name="Ohara O."/>
            <person name="Okazaki Y."/>
            <person name="Orlando V."/>
            <person name="Pang K.C."/>
            <person name="Pavan W.J."/>
            <person name="Pavesi G."/>
            <person name="Pesole G."/>
            <person name="Petrovsky N."/>
            <person name="Piazza S."/>
            <person name="Reed J."/>
            <person name="Reid J.F."/>
            <person name="Ring B.Z."/>
            <person name="Ringwald M."/>
            <person name="Rost B."/>
            <person name="Ruan Y."/>
            <person name="Salzberg S.L."/>
            <person name="Sandelin A."/>
            <person name="Schneider C."/>
            <person name="Schoenbach C."/>
            <person name="Sekiguchi K."/>
            <person name="Semple C.A."/>
            <person name="Seno S."/>
            <person name="Sessa L."/>
            <person name="Sheng Y."/>
            <person name="Shibata Y."/>
            <person name="Shimada H."/>
            <person name="Shimada K."/>
            <person name="Silva D."/>
            <person name="Sinclair B."/>
            <person name="Sperling S."/>
            <person name="Stupka E."/>
            <person name="Sugiura K."/>
            <person name="Sultana R."/>
            <person name="Takenaka Y."/>
            <person name="Taki K."/>
            <person name="Tammoja K."/>
            <person name="Tan S.L."/>
            <person name="Tang S."/>
            <person name="Taylor M.S."/>
            <person name="Tegner J."/>
            <person name="Teichmann S.A."/>
            <person name="Ueda H.R."/>
            <person name="van Nimwegen E."/>
            <person name="Verardo R."/>
            <person name="Wei C.L."/>
            <person name="Yagi K."/>
            <person name="Yamanishi H."/>
            <person name="Zabarovsky E."/>
            <person name="Zhu S."/>
            <person name="Zimmer A."/>
            <person name="Hide W."/>
            <person name="Bult C."/>
            <person name="Grimmond S.M."/>
            <person name="Teasdale R.D."/>
            <person name="Liu E.T."/>
            <person name="Brusic V."/>
            <person name="Quackenbush J."/>
            <person name="Wahlestedt C."/>
            <person name="Mattick J.S."/>
            <person name="Hume D.A."/>
            <person name="Kai C."/>
            <person name="Sasaki D."/>
            <person name="Tomaru Y."/>
            <person name="Fukuda S."/>
            <person name="Kanamori-Katayama M."/>
            <person name="Suzuki M."/>
            <person name="Aoki J."/>
            <person name="Arakawa T."/>
            <person name="Iida J."/>
            <person name="Imamura K."/>
            <person name="Itoh M."/>
            <person name="Kato T."/>
            <person name="Kawaji H."/>
            <person name="Kawagashira N."/>
            <person name="Kawashima T."/>
            <person name="Kojima M."/>
            <person name="Kondo S."/>
            <person name="Konno H."/>
            <person name="Nakano K."/>
            <person name="Ninomiya N."/>
            <person name="Nishio T."/>
            <person name="Okada M."/>
            <person name="Plessy C."/>
            <person name="Shibata K."/>
            <person name="Shiraki T."/>
            <person name="Suzuki S."/>
            <person name="Tagami M."/>
            <person name="Waki K."/>
            <person name="Watahiki A."/>
            <person name="Okamura-Oho Y."/>
            <person name="Suzuki H."/>
            <person name="Kawai J."/>
            <person name="Hayashizaki Y."/>
        </authorList>
    </citation>
    <scope>NUCLEOTIDE SEQUENCE [LARGE SCALE MRNA]</scope>
    <source>
        <strain>C57BL/6J</strain>
        <tissue>Cerebellum</tissue>
        <tissue>Kidney</tissue>
        <tissue>Medulla oblongata</tissue>
    </source>
</reference>
<reference key="2">
    <citation type="journal article" date="2009" name="PLoS Biol.">
        <title>Lineage-specific biology revealed by a finished genome assembly of the mouse.</title>
        <authorList>
            <person name="Church D.M."/>
            <person name="Goodstadt L."/>
            <person name="Hillier L.W."/>
            <person name="Zody M.C."/>
            <person name="Goldstein S."/>
            <person name="She X."/>
            <person name="Bult C.J."/>
            <person name="Agarwala R."/>
            <person name="Cherry J.L."/>
            <person name="DiCuccio M."/>
            <person name="Hlavina W."/>
            <person name="Kapustin Y."/>
            <person name="Meric P."/>
            <person name="Maglott D."/>
            <person name="Birtle Z."/>
            <person name="Marques A.C."/>
            <person name="Graves T."/>
            <person name="Zhou S."/>
            <person name="Teague B."/>
            <person name="Potamousis K."/>
            <person name="Churas C."/>
            <person name="Place M."/>
            <person name="Herschleb J."/>
            <person name="Runnheim R."/>
            <person name="Forrest D."/>
            <person name="Amos-Landgraf J."/>
            <person name="Schwartz D.C."/>
            <person name="Cheng Z."/>
            <person name="Lindblad-Toh K."/>
            <person name="Eichler E.E."/>
            <person name="Ponting C.P."/>
        </authorList>
    </citation>
    <scope>NUCLEOTIDE SEQUENCE [LARGE SCALE GENOMIC DNA]</scope>
    <source>
        <strain>C57BL/6J</strain>
    </source>
</reference>
<reference key="3">
    <citation type="journal article" date="2004" name="Genome Res.">
        <title>The status, quality, and expansion of the NIH full-length cDNA project: the Mammalian Gene Collection (MGC).</title>
        <authorList>
            <consortium name="The MGC Project Team"/>
        </authorList>
    </citation>
    <scope>NUCLEOTIDE SEQUENCE [LARGE SCALE MRNA]</scope>
    <source>
        <strain>FVB/N</strain>
        <tissue>Salivary gland</tissue>
    </source>
</reference>
<reference key="4">
    <citation type="journal article" date="2005" name="Science">
        <title>Tubulin polyglutamylase enzymes are members of the TTL domain protein family.</title>
        <authorList>
            <person name="Janke C."/>
            <person name="Rogowski K."/>
            <person name="Wloga D."/>
            <person name="Regnard C."/>
            <person name="Kajava A.V."/>
            <person name="Strub J.-M."/>
            <person name="Temurak N."/>
            <person name="van Dijk J."/>
            <person name="Boucher D."/>
            <person name="van Dorsselaer A."/>
            <person name="Suryavanshi S."/>
            <person name="Gaertig J."/>
            <person name="Edde B."/>
        </authorList>
    </citation>
    <scope>FUNCTION</scope>
    <scope>IDENTIFICATION BY MASS SPECTROMETRY AS PART OF THE TUBULIN POLYGLUTAMYLASE COMPLEX</scope>
    <scope>3D-STRUCTURE MODELING</scope>
</reference>
<reference key="5">
    <citation type="journal article" date="2007" name="Mol. Cell">
        <title>A targeted multienzyme mechanism for selective microtubule polyglutamylation.</title>
        <authorList>
            <person name="van Dijk J."/>
            <person name="Rogowski K."/>
            <person name="Miro J."/>
            <person name="Lacroix B."/>
            <person name="Edde B."/>
            <person name="Janke C."/>
        </authorList>
    </citation>
    <scope>TISSUE SPECIFICITY</scope>
    <scope>SUBCELLULAR LOCATION</scope>
    <source>
        <strain>C57BL/6J</strain>
        <tissue>Testis</tissue>
    </source>
</reference>
<reference key="6">
    <citation type="journal article" date="2010" name="Proc. Natl. Acad. Sci. U.S.A.">
        <title>Tubulin polyglutamylation is essential for airway ciliary function through the regulation of beating asymmetry.</title>
        <authorList>
            <person name="Ikegami K."/>
            <person name="Sato S."/>
            <person name="Nakamura K."/>
            <person name="Ostrowski L.E."/>
            <person name="Setou M."/>
        </authorList>
    </citation>
    <scope>FUNCTION</scope>
    <scope>SUBCELLULAR LOCATION</scope>
    <scope>DISRUPTION PHENOTYPE</scope>
</reference>
<reference key="7">
    <citation type="journal article" date="2010" name="Vet. Pathol.">
        <title>Tubulin tyrosine ligase-like 1 deficiency results in chronic rhinosinusitis and abnormal development of spermatid flagella in mice.</title>
        <authorList>
            <person name="Vogel P."/>
            <person name="Hansen G."/>
            <person name="Fontenot G."/>
            <person name="Read R."/>
        </authorList>
    </citation>
    <scope>FUNCTION</scope>
    <scope>SUBCELLULAR LOCATION</scope>
    <scope>DISRUPTION PHENOTYPE</scope>
</reference>
<reference key="8">
    <citation type="journal article" date="2012" name="J. Biol. Chem.">
        <title>Cytosolic carboxypeptidase 1 is involved in processing alpha- and beta-tubulin.</title>
        <authorList>
            <person name="Berezniuk I."/>
            <person name="Vu H.T."/>
            <person name="Lyons P.J."/>
            <person name="Sironi J.J."/>
            <person name="Xiao H."/>
            <person name="Burd B."/>
            <person name="Setou M."/>
            <person name="Angeletti R.H."/>
            <person name="Ikegami K."/>
            <person name="Fricker L.D."/>
        </authorList>
    </citation>
    <scope>FUNCTION</scope>
</reference>
<reference key="9">
    <citation type="journal article" date="2013" name="J. Cell Biol.">
        <title>Tubulin glycylases and glutamylases have distinct functions in stabilization and motility of ependymal cilia.</title>
        <authorList>
            <person name="Bosch Grau M."/>
            <person name="Gonzalez Curto G."/>
            <person name="Rocha C."/>
            <person name="Magiera M.M."/>
            <person name="Marques Sousa P."/>
            <person name="Giordano T."/>
            <person name="Spassky N."/>
            <person name="Janke C."/>
        </authorList>
    </citation>
    <scope>TISSUE SPECIFICITY</scope>
</reference>
<reference key="10">
    <citation type="journal article" date="2018" name="Nat. Commun.">
        <title>Klf4 glutamylation is required for cell reprogramming and early embryonic development in mice.</title>
        <authorList>
            <person name="Ye B."/>
            <person name="Liu B."/>
            <person name="Hao L."/>
            <person name="Zhu X."/>
            <person name="Yang L."/>
            <person name="Wang S."/>
            <person name="Xia P."/>
            <person name="Du Y."/>
            <person name="Meng S."/>
            <person name="Huang G."/>
            <person name="Qin X."/>
            <person name="Wang Y."/>
            <person name="Yan X."/>
            <person name="Li C."/>
            <person name="Hao J."/>
            <person name="Zhu P."/>
            <person name="He L."/>
            <person name="Tian Y."/>
            <person name="Fan Z."/>
        </authorList>
    </citation>
    <scope>FUNCTION</scope>
    <scope>SUBCELLULAR LOCATION</scope>
</reference>
<reference key="11">
    <citation type="journal article" date="2020" name="Nat. Struct. Mol. Biol.">
        <title>Structural basis for polyglutamate chain initiation and elongation by TTLL family enzymes.</title>
        <authorList>
            <person name="Mahalingan K.K."/>
            <person name="Keith Keenan E."/>
            <person name="Strickland M."/>
            <person name="Li Y."/>
            <person name="Liu Y."/>
            <person name="Ball H.L."/>
            <person name="Tanner M.E."/>
            <person name="Tjandra N."/>
            <person name="Roll-Mecak A."/>
        </authorList>
    </citation>
    <scope>FUNCTION</scope>
</reference>
<accession>Q91V51</accession>
<accession>Q3TGC8</accession>
<accession>Q543S4</accession>
<accession>Q8C0A2</accession>
<accession>Q91ZG1</accession>
<name>TTLL1_MOUSE</name>
<sequence>MAGRVKWVTDIEKSVLINNFEKRGWIQVTENEDWNFYWMSVQTIRNVFSVETGYRLSDDQIVNHFPNHYELTRKDLMVKNIKRYRKELEKEGSPLAEKDENGKYLYLDFVPVTYMLPADYNLFVEEFRKSPSSTWIMKPCGKAQGKGIFLINKLSQIKKWSRDSKTSSFVSQSTKEAYVISVYINNPLLIGGRKFDLRLYVLVSTYRPLRCYMYKLGFCRFCTVKYTPSTSELDNMFVHLTNVAIQKHGEDYNHIHGGKWTVNNLRLYLESTRGREVTSKLFDEIHWIIVQSLKAVAPVMNNDKHCFECYGYDIIIDDKLKPWLIEVNASPSLTSSTANDRILKYNLINDTLNIAVPNGEIPDCKWNKSPPKEVLGNYEILYDEELAQGDGAERELRNRPGQPVGPRAGRSRDSGRSVLTTWK</sequence>
<dbReference type="EC" id="6.3.2.-" evidence="15"/>
<dbReference type="EMBL" id="AK031917">
    <property type="protein sequence ID" value="BAC27603.1"/>
    <property type="molecule type" value="mRNA"/>
</dbReference>
<dbReference type="EMBL" id="AK047046">
    <property type="protein sequence ID" value="BAC32947.1"/>
    <property type="molecule type" value="mRNA"/>
</dbReference>
<dbReference type="EMBL" id="AK140472">
    <property type="protein sequence ID" value="BAE24404.1"/>
    <property type="molecule type" value="mRNA"/>
</dbReference>
<dbReference type="EMBL" id="AK168786">
    <property type="protein sequence ID" value="BAE40620.1"/>
    <property type="molecule type" value="mRNA"/>
</dbReference>
<dbReference type="EMBL" id="AK169150">
    <property type="protein sequence ID" value="BAE40929.1"/>
    <property type="molecule type" value="mRNA"/>
</dbReference>
<dbReference type="EMBL" id="AL583887">
    <property type="status" value="NOT_ANNOTATED_CDS"/>
    <property type="molecule type" value="Genomic_DNA"/>
</dbReference>
<dbReference type="EMBL" id="BC010510">
    <property type="protein sequence ID" value="AAH10510.1"/>
    <property type="molecule type" value="mRNA"/>
</dbReference>
<dbReference type="CCDS" id="CCDS27702.1"/>
<dbReference type="RefSeq" id="NP_001344882.1">
    <property type="nucleotide sequence ID" value="NM_001357953.1"/>
</dbReference>
<dbReference type="RefSeq" id="NP_849200.2">
    <property type="nucleotide sequence ID" value="NM_178869.4"/>
</dbReference>
<dbReference type="RefSeq" id="XP_006521141.1">
    <property type="nucleotide sequence ID" value="XM_006521078.4"/>
</dbReference>
<dbReference type="RefSeq" id="XP_011243961.1">
    <property type="nucleotide sequence ID" value="XM_011245659.2"/>
</dbReference>
<dbReference type="SMR" id="Q91V51"/>
<dbReference type="CORUM" id="Q91V51"/>
<dbReference type="FunCoup" id="Q91V51">
    <property type="interactions" value="313"/>
</dbReference>
<dbReference type="STRING" id="10090.ENSMUSP00000016897"/>
<dbReference type="PhosphoSitePlus" id="Q91V51"/>
<dbReference type="PaxDb" id="10090-ENSMUSP00000016897"/>
<dbReference type="PeptideAtlas" id="Q91V51"/>
<dbReference type="ProteomicsDB" id="297752"/>
<dbReference type="Pumba" id="Q91V51"/>
<dbReference type="Antibodypedia" id="27458">
    <property type="antibodies" value="43 antibodies from 18 providers"/>
</dbReference>
<dbReference type="DNASU" id="319953"/>
<dbReference type="Ensembl" id="ENSMUST00000016897.12">
    <property type="protein sequence ID" value="ENSMUSP00000016897.5"/>
    <property type="gene ID" value="ENSMUSG00000022442.17"/>
</dbReference>
<dbReference type="Ensembl" id="ENSMUST00000109480.8">
    <property type="protein sequence ID" value="ENSMUSP00000105106.2"/>
    <property type="gene ID" value="ENSMUSG00000022442.17"/>
</dbReference>
<dbReference type="GeneID" id="319953"/>
<dbReference type="KEGG" id="mmu:319953"/>
<dbReference type="UCSC" id="uc007xbc.2">
    <property type="organism name" value="mouse"/>
</dbReference>
<dbReference type="AGR" id="MGI:2443047"/>
<dbReference type="CTD" id="25809"/>
<dbReference type="MGI" id="MGI:2443047">
    <property type="gene designation" value="Ttll1"/>
</dbReference>
<dbReference type="VEuPathDB" id="HostDB:ENSMUSG00000022442"/>
<dbReference type="eggNOG" id="KOG2157">
    <property type="taxonomic scope" value="Eukaryota"/>
</dbReference>
<dbReference type="GeneTree" id="ENSGT00940000156720"/>
<dbReference type="InParanoid" id="Q91V51"/>
<dbReference type="OMA" id="DWNFYWS"/>
<dbReference type="OrthoDB" id="202825at2759"/>
<dbReference type="PhylomeDB" id="Q91V51"/>
<dbReference type="TreeFam" id="TF313087"/>
<dbReference type="BRENDA" id="6.3.2.B3">
    <property type="organism ID" value="3474"/>
</dbReference>
<dbReference type="BioGRID-ORCS" id="319953">
    <property type="hits" value="0 hits in 77 CRISPR screens"/>
</dbReference>
<dbReference type="ChiTaRS" id="Ttll1">
    <property type="organism name" value="mouse"/>
</dbReference>
<dbReference type="PRO" id="PR:Q91V51"/>
<dbReference type="Proteomes" id="UP000000589">
    <property type="component" value="Chromosome 15"/>
</dbReference>
<dbReference type="RNAct" id="Q91V51">
    <property type="molecule type" value="protein"/>
</dbReference>
<dbReference type="Bgee" id="ENSMUSG00000022442">
    <property type="expression patterns" value="Expressed in myocardium of ventricle and 246 other cell types or tissues"/>
</dbReference>
<dbReference type="ExpressionAtlas" id="Q91V51">
    <property type="expression patterns" value="baseline and differential"/>
</dbReference>
<dbReference type="GO" id="GO:0036064">
    <property type="term" value="C:ciliary basal body"/>
    <property type="evidence" value="ECO:0000314"/>
    <property type="project" value="MGI"/>
</dbReference>
<dbReference type="GO" id="GO:0005829">
    <property type="term" value="C:cytosol"/>
    <property type="evidence" value="ECO:0000304"/>
    <property type="project" value="Reactome"/>
</dbReference>
<dbReference type="GO" id="GO:0005576">
    <property type="term" value="C:extracellular region"/>
    <property type="evidence" value="ECO:0007669"/>
    <property type="project" value="GOC"/>
</dbReference>
<dbReference type="GO" id="GO:0005874">
    <property type="term" value="C:microtubule"/>
    <property type="evidence" value="ECO:0007669"/>
    <property type="project" value="UniProtKB-KW"/>
</dbReference>
<dbReference type="GO" id="GO:0031514">
    <property type="term" value="C:motile cilium"/>
    <property type="evidence" value="ECO:0007669"/>
    <property type="project" value="UniProtKB-SubCell"/>
</dbReference>
<dbReference type="GO" id="GO:0005524">
    <property type="term" value="F:ATP binding"/>
    <property type="evidence" value="ECO:0007669"/>
    <property type="project" value="UniProtKB-KW"/>
</dbReference>
<dbReference type="GO" id="GO:0046872">
    <property type="term" value="F:metal ion binding"/>
    <property type="evidence" value="ECO:0007669"/>
    <property type="project" value="UniProtKB-KW"/>
</dbReference>
<dbReference type="GO" id="GO:0106438">
    <property type="term" value="F:protein-glutamic acid ligase activity, elongating"/>
    <property type="evidence" value="ECO:0007669"/>
    <property type="project" value="RHEA"/>
</dbReference>
<dbReference type="GO" id="GO:0070740">
    <property type="term" value="F:tubulin-glutamic acid ligase activity"/>
    <property type="evidence" value="ECO:0000314"/>
    <property type="project" value="MGI"/>
</dbReference>
<dbReference type="GO" id="GO:0035082">
    <property type="term" value="P:axoneme assembly"/>
    <property type="evidence" value="ECO:0000315"/>
    <property type="project" value="MGI"/>
</dbReference>
<dbReference type="GO" id="GO:0021702">
    <property type="term" value="P:cerebellar Purkinje cell differentiation"/>
    <property type="evidence" value="ECO:0000316"/>
    <property type="project" value="MGI"/>
</dbReference>
<dbReference type="GO" id="GO:0003351">
    <property type="term" value="P:epithelial cilium movement involved in extracellular fluid movement"/>
    <property type="evidence" value="ECO:0000315"/>
    <property type="project" value="MGI"/>
</dbReference>
<dbReference type="GO" id="GO:0030317">
    <property type="term" value="P:flagellated sperm motility"/>
    <property type="evidence" value="ECO:0000315"/>
    <property type="project" value="MGI"/>
</dbReference>
<dbReference type="GO" id="GO:0002395">
    <property type="term" value="P:immune response in nasopharyngeal-associated lymphoid tissue"/>
    <property type="evidence" value="ECO:0000315"/>
    <property type="project" value="MGI"/>
</dbReference>
<dbReference type="GO" id="GO:0120197">
    <property type="term" value="P:mucociliary clearance"/>
    <property type="evidence" value="ECO:0000315"/>
    <property type="project" value="MGI"/>
</dbReference>
<dbReference type="GO" id="GO:0036211">
    <property type="term" value="P:protein modification process"/>
    <property type="evidence" value="ECO:0007669"/>
    <property type="project" value="InterPro"/>
</dbReference>
<dbReference type="GO" id="GO:0120222">
    <property type="term" value="P:regulation of blastocyst development"/>
    <property type="evidence" value="ECO:0000315"/>
    <property type="project" value="MGI"/>
</dbReference>
<dbReference type="GO" id="GO:0007288">
    <property type="term" value="P:sperm axoneme assembly"/>
    <property type="evidence" value="ECO:0000315"/>
    <property type="project" value="MGI"/>
</dbReference>
<dbReference type="FunFam" id="3.30.470.20:FF:000033">
    <property type="entry name" value="Probable tubulin polyglutamylase TTLL1"/>
    <property type="match status" value="1"/>
</dbReference>
<dbReference type="Gene3D" id="3.30.470.20">
    <property type="entry name" value="ATP-grasp fold, B domain"/>
    <property type="match status" value="1"/>
</dbReference>
<dbReference type="InterPro" id="IPR004344">
    <property type="entry name" value="TTL/TTLL_fam"/>
</dbReference>
<dbReference type="PANTHER" id="PTHR12241:SF31">
    <property type="entry name" value="POLYGLUTAMYLASE COMPLEX SUBUNIT TTLL1"/>
    <property type="match status" value="1"/>
</dbReference>
<dbReference type="PANTHER" id="PTHR12241">
    <property type="entry name" value="TUBULIN POLYGLUTAMYLASE"/>
    <property type="match status" value="1"/>
</dbReference>
<dbReference type="Pfam" id="PF03133">
    <property type="entry name" value="TTL"/>
    <property type="match status" value="1"/>
</dbReference>
<dbReference type="SUPFAM" id="SSF56059">
    <property type="entry name" value="Glutathione synthetase ATP-binding domain-like"/>
    <property type="match status" value="1"/>
</dbReference>
<dbReference type="PROSITE" id="PS51221">
    <property type="entry name" value="TTL"/>
    <property type="match status" value="1"/>
</dbReference>
<feature type="chain" id="PRO_0000212439" description="Polyglutamylase complex subunit TTLL1">
    <location>
        <begin position="1"/>
        <end position="423"/>
    </location>
</feature>
<feature type="domain" description="TTL" evidence="3">
    <location>
        <begin position="1"/>
        <end position="367"/>
    </location>
</feature>
<feature type="region of interest" description="Disordered" evidence="4">
    <location>
        <begin position="390"/>
        <end position="423"/>
    </location>
</feature>
<feature type="binding site" evidence="1">
    <location>
        <position position="138"/>
    </location>
    <ligand>
        <name>ATP</name>
        <dbReference type="ChEBI" id="CHEBI:30616"/>
    </ligand>
</feature>
<feature type="binding site" evidence="1">
    <location>
        <begin position="144"/>
        <end position="145"/>
    </location>
    <ligand>
        <name>ATP</name>
        <dbReference type="ChEBI" id="CHEBI:30616"/>
    </ligand>
</feature>
<feature type="binding site" evidence="1">
    <location>
        <position position="144"/>
    </location>
    <ligand>
        <name>a protein</name>
        <dbReference type="ChEBI" id="CHEBI:16541"/>
    </ligand>
    <ligandPart>
        <name>L-glutamate residue</name>
        <dbReference type="ChEBI" id="CHEBI:29973"/>
        <note>L-glutamate acceptor residue in protein target</note>
    </ligandPart>
</feature>
<feature type="binding site" evidence="1">
    <location>
        <begin position="181"/>
        <end position="184"/>
    </location>
    <ligand>
        <name>ATP</name>
        <dbReference type="ChEBI" id="CHEBI:30616"/>
    </ligand>
</feature>
<feature type="binding site" evidence="1">
    <location>
        <begin position="194"/>
        <end position="196"/>
    </location>
    <ligand>
        <name>ATP</name>
        <dbReference type="ChEBI" id="CHEBI:30616"/>
    </ligand>
</feature>
<feature type="binding site" evidence="1">
    <location>
        <position position="220"/>
    </location>
    <ligand>
        <name>L-glutamate</name>
        <dbReference type="ChEBI" id="CHEBI:29985"/>
    </ligand>
</feature>
<feature type="binding site" evidence="1">
    <location>
        <begin position="241"/>
        <end position="242"/>
    </location>
    <ligand>
        <name>ATP</name>
        <dbReference type="ChEBI" id="CHEBI:30616"/>
    </ligand>
</feature>
<feature type="binding site" evidence="1">
    <location>
        <position position="259"/>
    </location>
    <ligand>
        <name>L-glutamate</name>
        <dbReference type="ChEBI" id="CHEBI:29985"/>
    </ligand>
</feature>
<feature type="binding site" evidence="1">
    <location>
        <position position="313"/>
    </location>
    <ligand>
        <name>Mg(2+)</name>
        <dbReference type="ChEBI" id="CHEBI:18420"/>
        <label>1</label>
    </ligand>
</feature>
<feature type="binding site" evidence="1">
    <location>
        <position position="326"/>
    </location>
    <ligand>
        <name>Mg(2+)</name>
        <dbReference type="ChEBI" id="CHEBI:18420"/>
        <label>1</label>
    </ligand>
</feature>
<feature type="binding site" evidence="1">
    <location>
        <position position="326"/>
    </location>
    <ligand>
        <name>Mg(2+)</name>
        <dbReference type="ChEBI" id="CHEBI:18420"/>
        <label>2</label>
    </ligand>
</feature>
<feature type="binding site" evidence="1">
    <location>
        <position position="328"/>
    </location>
    <ligand>
        <name>Mg(2+)</name>
        <dbReference type="ChEBI" id="CHEBI:18420"/>
        <label>2</label>
    </ligand>
</feature>
<feature type="binding site" evidence="1">
    <location>
        <position position="344"/>
    </location>
    <ligand>
        <name>L-glutamate</name>
        <dbReference type="ChEBI" id="CHEBI:29985"/>
    </ligand>
</feature>
<feature type="site" description="Essential for specifying alpha-elongation versus initiation step of the polyglutamylase activity" evidence="1">
    <location>
        <position position="144"/>
    </location>
</feature>
<feature type="sequence conflict" description="In Ref. 1; BAC27603." evidence="14" ref="1">
    <original>N</original>
    <variation>K</variation>
    <location>
        <position position="80"/>
    </location>
</feature>
<feature type="sequence conflict" description="In Ref. 1; BAE40620." evidence="14" ref="1">
    <original>E</original>
    <variation>K</variation>
    <location>
        <position position="379"/>
    </location>
</feature>
<gene>
    <name evidence="19" type="primary">Ttll1</name>
</gene>
<organism>
    <name type="scientific">Mus musculus</name>
    <name type="common">Mouse</name>
    <dbReference type="NCBI Taxonomy" id="10090"/>
    <lineage>
        <taxon>Eukaryota</taxon>
        <taxon>Metazoa</taxon>
        <taxon>Chordata</taxon>
        <taxon>Craniata</taxon>
        <taxon>Vertebrata</taxon>
        <taxon>Euteleostomi</taxon>
        <taxon>Mammalia</taxon>
        <taxon>Eutheria</taxon>
        <taxon>Euarchontoglires</taxon>
        <taxon>Glires</taxon>
        <taxon>Rodentia</taxon>
        <taxon>Myomorpha</taxon>
        <taxon>Muroidea</taxon>
        <taxon>Muridae</taxon>
        <taxon>Murinae</taxon>
        <taxon>Mus</taxon>
        <taxon>Mus</taxon>
    </lineage>
</organism>
<proteinExistence type="evidence at protein level"/>
<evidence type="ECO:0000250" key="1">
    <source>
        <dbReference type="UniProtKB" id="A4Q9E8"/>
    </source>
</evidence>
<evidence type="ECO:0000250" key="2">
    <source>
        <dbReference type="UniProtKB" id="O95922"/>
    </source>
</evidence>
<evidence type="ECO:0000255" key="3">
    <source>
        <dbReference type="PROSITE-ProRule" id="PRU00568"/>
    </source>
</evidence>
<evidence type="ECO:0000256" key="4">
    <source>
        <dbReference type="SAM" id="MobiDB-lite"/>
    </source>
</evidence>
<evidence type="ECO:0000269" key="5">
    <source>
    </source>
</evidence>
<evidence type="ECO:0000269" key="6">
    <source>
    </source>
</evidence>
<evidence type="ECO:0000269" key="7">
    <source>
    </source>
</evidence>
<evidence type="ECO:0000269" key="8">
    <source>
    </source>
</evidence>
<evidence type="ECO:0000269" key="9">
    <source>
    </source>
</evidence>
<evidence type="ECO:0000269" key="10">
    <source>
    </source>
</evidence>
<evidence type="ECO:0000269" key="11">
    <source>
    </source>
</evidence>
<evidence type="ECO:0000303" key="12">
    <source>
    </source>
</evidence>
<evidence type="ECO:0000303" key="13">
    <source>
    </source>
</evidence>
<evidence type="ECO:0000305" key="14"/>
<evidence type="ECO:0000305" key="15">
    <source>
    </source>
</evidence>
<evidence type="ECO:0000305" key="16">
    <source>
    </source>
</evidence>
<evidence type="ECO:0000305" key="17">
    <source>
    </source>
</evidence>
<evidence type="ECO:0000305" key="18">
    <source ref="11"/>
</evidence>
<evidence type="ECO:0000312" key="19">
    <source>
        <dbReference type="MGI" id="MGI:2443047"/>
    </source>
</evidence>
<protein>
    <recommendedName>
        <fullName evidence="14">Polyglutamylase complex subunit TTLL1</fullName>
        <ecNumber evidence="15">6.3.2.-</ecNumber>
    </recommendedName>
    <alternativeName>
        <fullName>Tubulin polyglutamylase TTLL1</fullName>
    </alternativeName>
    <alternativeName>
        <fullName evidence="12">Tubulin polyglutamylase complex subunit 3</fullName>
        <shortName evidence="12">PGs3</shortName>
    </alternativeName>
    <alternativeName>
        <fullName evidence="13">Tubulin--tyrosine ligase-like protein 1</fullName>
    </alternativeName>
    <alternativeName>
        <fullName evidence="12">p49</fullName>
    </alternativeName>
</protein>
<comment type="function">
    <text evidence="5 7 8 9 10 11 18">Catalytic subunit of a polyglutamylase complex which modifies tubulin, generating side chains of glutamate on the gamma-carboxyl group of specific glutamate residues within the C-terminal tail of tubulin (PubMed:15890843). Probably involved in the side-chain elongation step of the polyglutamylation reaction rather than the initiation step (Probable). Modifies both alpha- and beta-tubulins with a preference for the alpha-tail (PubMed:15890843, PubMed:22170066). Unlike most polyglutamylases of the tubulin--tyrosine ligase family, only displays a catalytic activity when in complex with other proteins as it is most likely lacking domains important for autonomous activity (PubMed:15890843). Part of the neuronal tubulin polyglutamylase complex (PubMed:15890843). Mediates cilia and flagella polyglutamylation which is essential for their biogenesis and motility (PubMed:20442420, PubMed:20498047, PubMed:23897886). Involved in respiratory motile cilia function through the regulation of beating asymmetry (PubMed:20442420, PubMed:20498047). Essential for sperm flagella biogenesis, motility and male fertility (PubMed:20442420). Also mediates glutamylation of non-tubulin proteins (PubMed:29593216). Involved in KLF4 glutamylation which impedes its ubiquitination, thereby leading to somatic cell reprogramming, pluripotency maintenance and embryogenesis (PubMed:29593216).</text>
</comment>
<comment type="catalytic activity">
    <reaction evidence="15">
        <text>(L-glutamyl)(n)-gamma-L-glutamyl-L-glutamyl-[protein] + L-glutamate + ATP = (L-glutamyl)(n+1)-gamma-L-glutamyl-L-glutamyl-[protein] + ADP + phosphate + H(+)</text>
        <dbReference type="Rhea" id="RHEA:60148"/>
        <dbReference type="Rhea" id="RHEA-COMP:15519"/>
        <dbReference type="Rhea" id="RHEA-COMP:15675"/>
        <dbReference type="ChEBI" id="CHEBI:15378"/>
        <dbReference type="ChEBI" id="CHEBI:29985"/>
        <dbReference type="ChEBI" id="CHEBI:30616"/>
        <dbReference type="ChEBI" id="CHEBI:43474"/>
        <dbReference type="ChEBI" id="CHEBI:143623"/>
        <dbReference type="ChEBI" id="CHEBI:456216"/>
    </reaction>
    <physiologicalReaction direction="left-to-right" evidence="15">
        <dbReference type="Rhea" id="RHEA:60149"/>
    </physiologicalReaction>
</comment>
<comment type="cofactor">
    <cofactor evidence="1">
        <name>Mg(2+)</name>
        <dbReference type="ChEBI" id="CHEBI:18420"/>
    </cofactor>
</comment>
<comment type="subunit">
    <text evidence="2 5">Part of the neuronal tubulin polyglutamylase complex which contains TPGS1, TPGS2, TTLL1, LRRC49 and NICN1. Interacts with PCM1, CSTPP1 and LRRC49 (By similarity).</text>
</comment>
<comment type="subcellular location">
    <subcellularLocation>
        <location evidence="6 8">Cytoplasm</location>
        <location evidence="6 8">Cytoskeleton</location>
    </subcellularLocation>
    <subcellularLocation>
        <location evidence="6">Cytoplasm</location>
        <location evidence="6">Cytoskeleton</location>
        <location evidence="6">Cilium basal body</location>
    </subcellularLocation>
    <subcellularLocation>
        <location evidence="17">Cytoplasm</location>
        <location evidence="17">Cytoskeleton</location>
        <location evidence="17">Cilium axoneme</location>
    </subcellularLocation>
    <subcellularLocation>
        <location evidence="16">Cell projection</location>
        <location evidence="16">Cilium</location>
        <location evidence="16">Flagellum</location>
    </subcellularLocation>
</comment>
<comment type="tissue specificity">
    <text evidence="6 7 10 11">Highly expressed in brain, heart and kidney (PubMed:17499049, PubMed:20442420). Expressed in liver, lung, muscle, spleen, testis and trachea (PubMed:17499049, PubMed:20442420). In the brain, expressed in ependymal cilia, cortex, corpus callosum and striatum (PubMed:23897886). Expressed in blastomere (PubMed:29593216).</text>
</comment>
<comment type="domain">
    <text evidence="1">Gln-144 is the main determinant for regioselectivity, which segregates between initiases and elongases in all tubulin--tyrosine ligase family. A glutamine residue at this position is found in elongases TTLL6, TTLL9, TTLL11, TTLL13, TTLL10 and favors glutamate-chain elongation, whereas an arginine residue is found in initiases TTLL2, TTLL4, TTLL5, TTLL3, TTLL8 and favors initiation.</text>
</comment>
<comment type="disruption phenotype">
    <text evidence="7 8">Knockout mice exhibit a loss of axonemal curvature and beating asymmetry in tracheal epithelial cilia, resulting in a reduction of cilia-generated fluid flow in trachea (PubMed:20498047). Knockout mice exhibit accumulations of exudates in the nasal passages and sinuses, rhinosinusitis and otitis media, and also emitted frequent coughing- or sneezing-like noises (PubMed:20442420, PubMed:20498047). Knockout male show abnormal sperm morphology and function characterized by shortened or absent flagella and immotility, and male infertility (PubMed:20442420, PubMed:20498047). Partial loss of tubulin glutamylation, probably due to redundancy with other polyglutamylases (PubMed:20498047).</text>
</comment>
<comment type="similarity">
    <text evidence="14">Belongs to the tubulin polyglutamylase family.</text>
</comment>
<keyword id="KW-0067">ATP-binding</keyword>
<keyword id="KW-0966">Cell projection</keyword>
<keyword id="KW-0969">Cilium</keyword>
<keyword id="KW-0963">Cytoplasm</keyword>
<keyword id="KW-0206">Cytoskeleton</keyword>
<keyword id="KW-0282">Flagellum</keyword>
<keyword id="KW-0436">Ligase</keyword>
<keyword id="KW-0460">Magnesium</keyword>
<keyword id="KW-0479">Metal-binding</keyword>
<keyword id="KW-0493">Microtubule</keyword>
<keyword id="KW-0547">Nucleotide-binding</keyword>
<keyword id="KW-1185">Reference proteome</keyword>